<keyword id="KW-0963">Cytoplasm</keyword>
<keyword id="KW-0489">Methyltransferase</keyword>
<keyword id="KW-0698">rRNA processing</keyword>
<keyword id="KW-0949">S-adenosyl-L-methionine</keyword>
<keyword id="KW-0808">Transferase</keyword>
<sequence>MMEVPREIIEKLEIFQKLVKKWNKSINLVSDNTIHNFWQRHILDSLQLIQYIDNKEIHLVDIGSGAGLPGIVLSIAGVAQVSLIEADLRKCIFLEKASKISNNNVQIINQRIEKVEIDCSILTCRAFSNLNTIFNCIKNISVREKFLLLKGKNYLTEIVEAKERWLFGYLIHQSITCEEGKILEVSNLTKMI</sequence>
<organism>
    <name type="scientific">Rickettsia rickettsii (strain Iowa)</name>
    <dbReference type="NCBI Taxonomy" id="452659"/>
    <lineage>
        <taxon>Bacteria</taxon>
        <taxon>Pseudomonadati</taxon>
        <taxon>Pseudomonadota</taxon>
        <taxon>Alphaproteobacteria</taxon>
        <taxon>Rickettsiales</taxon>
        <taxon>Rickettsiaceae</taxon>
        <taxon>Rickettsieae</taxon>
        <taxon>Rickettsia</taxon>
        <taxon>spotted fever group</taxon>
    </lineage>
</organism>
<gene>
    <name evidence="1" type="primary">rsmG</name>
    <name type="ordered locus">RrIowa_0110</name>
</gene>
<accession>B0BW04</accession>
<name>RSMG_RICRO</name>
<reference key="1">
    <citation type="journal article" date="2008" name="Infect. Immun.">
        <title>Genomic comparison of virulent Rickettsia rickettsii Sheila Smith and avirulent Rickettsia rickettsii Iowa.</title>
        <authorList>
            <person name="Ellison D.W."/>
            <person name="Clark T.R."/>
            <person name="Sturdevant D.E."/>
            <person name="Virtaneva K."/>
            <person name="Porcella S.F."/>
            <person name="Hackstadt T."/>
        </authorList>
    </citation>
    <scope>NUCLEOTIDE SEQUENCE [LARGE SCALE GENOMIC DNA]</scope>
    <source>
        <strain>Iowa</strain>
    </source>
</reference>
<feature type="chain" id="PRO_1000075228" description="Ribosomal RNA small subunit methyltransferase G">
    <location>
        <begin position="1"/>
        <end position="192"/>
    </location>
</feature>
<feature type="binding site" evidence="1">
    <location>
        <position position="63"/>
    </location>
    <ligand>
        <name>S-adenosyl-L-methionine</name>
        <dbReference type="ChEBI" id="CHEBI:59789"/>
    </ligand>
</feature>
<feature type="binding site" evidence="1">
    <location>
        <position position="68"/>
    </location>
    <ligand>
        <name>S-adenosyl-L-methionine</name>
        <dbReference type="ChEBI" id="CHEBI:59789"/>
    </ligand>
</feature>
<feature type="binding site" evidence="1">
    <location>
        <begin position="112"/>
        <end position="113"/>
    </location>
    <ligand>
        <name>S-adenosyl-L-methionine</name>
        <dbReference type="ChEBI" id="CHEBI:59789"/>
    </ligand>
</feature>
<feature type="binding site" evidence="1">
    <location>
        <position position="125"/>
    </location>
    <ligand>
        <name>S-adenosyl-L-methionine</name>
        <dbReference type="ChEBI" id="CHEBI:59789"/>
    </ligand>
</feature>
<evidence type="ECO:0000255" key="1">
    <source>
        <dbReference type="HAMAP-Rule" id="MF_00074"/>
    </source>
</evidence>
<proteinExistence type="inferred from homology"/>
<dbReference type="EC" id="2.1.1.170" evidence="1"/>
<dbReference type="EMBL" id="CP000766">
    <property type="protein sequence ID" value="ABY72030.1"/>
    <property type="molecule type" value="Genomic_DNA"/>
</dbReference>
<dbReference type="SMR" id="B0BW04"/>
<dbReference type="KEGG" id="rrj:RrIowa_0110"/>
<dbReference type="eggNOG" id="COG0357">
    <property type="taxonomic scope" value="Bacteria"/>
</dbReference>
<dbReference type="HOGENOM" id="CLU_065341_1_1_5"/>
<dbReference type="Proteomes" id="UP000000796">
    <property type="component" value="Chromosome"/>
</dbReference>
<dbReference type="GO" id="GO:0005829">
    <property type="term" value="C:cytosol"/>
    <property type="evidence" value="ECO:0007669"/>
    <property type="project" value="TreeGrafter"/>
</dbReference>
<dbReference type="GO" id="GO:0070043">
    <property type="term" value="F:rRNA (guanine-N7-)-methyltransferase activity"/>
    <property type="evidence" value="ECO:0007669"/>
    <property type="project" value="UniProtKB-UniRule"/>
</dbReference>
<dbReference type="Gene3D" id="3.40.50.150">
    <property type="entry name" value="Vaccinia Virus protein VP39"/>
    <property type="match status" value="1"/>
</dbReference>
<dbReference type="HAMAP" id="MF_00074">
    <property type="entry name" value="16SrRNA_methyltr_G"/>
    <property type="match status" value="1"/>
</dbReference>
<dbReference type="InterPro" id="IPR003682">
    <property type="entry name" value="rRNA_ssu_MeTfrase_G"/>
</dbReference>
<dbReference type="InterPro" id="IPR029063">
    <property type="entry name" value="SAM-dependent_MTases_sf"/>
</dbReference>
<dbReference type="NCBIfam" id="TIGR00138">
    <property type="entry name" value="rsmG_gidB"/>
    <property type="match status" value="1"/>
</dbReference>
<dbReference type="PANTHER" id="PTHR31760">
    <property type="entry name" value="S-ADENOSYL-L-METHIONINE-DEPENDENT METHYLTRANSFERASES SUPERFAMILY PROTEIN"/>
    <property type="match status" value="1"/>
</dbReference>
<dbReference type="PANTHER" id="PTHR31760:SF0">
    <property type="entry name" value="S-ADENOSYL-L-METHIONINE-DEPENDENT METHYLTRANSFERASES SUPERFAMILY PROTEIN"/>
    <property type="match status" value="1"/>
</dbReference>
<dbReference type="Pfam" id="PF02527">
    <property type="entry name" value="GidB"/>
    <property type="match status" value="1"/>
</dbReference>
<dbReference type="PIRSF" id="PIRSF003078">
    <property type="entry name" value="GidB"/>
    <property type="match status" value="1"/>
</dbReference>
<dbReference type="SUPFAM" id="SSF53335">
    <property type="entry name" value="S-adenosyl-L-methionine-dependent methyltransferases"/>
    <property type="match status" value="1"/>
</dbReference>
<comment type="function">
    <text evidence="1">Specifically methylates the N7 position of guanine in position 527 of 16S rRNA.</text>
</comment>
<comment type="catalytic activity">
    <reaction evidence="1">
        <text>guanosine(527) in 16S rRNA + S-adenosyl-L-methionine = N(7)-methylguanosine(527) in 16S rRNA + S-adenosyl-L-homocysteine</text>
        <dbReference type="Rhea" id="RHEA:42732"/>
        <dbReference type="Rhea" id="RHEA-COMP:10209"/>
        <dbReference type="Rhea" id="RHEA-COMP:10210"/>
        <dbReference type="ChEBI" id="CHEBI:57856"/>
        <dbReference type="ChEBI" id="CHEBI:59789"/>
        <dbReference type="ChEBI" id="CHEBI:74269"/>
        <dbReference type="ChEBI" id="CHEBI:74480"/>
        <dbReference type="EC" id="2.1.1.170"/>
    </reaction>
</comment>
<comment type="subcellular location">
    <subcellularLocation>
        <location evidence="1">Cytoplasm</location>
    </subcellularLocation>
</comment>
<comment type="similarity">
    <text evidence="1">Belongs to the methyltransferase superfamily. RNA methyltransferase RsmG family.</text>
</comment>
<protein>
    <recommendedName>
        <fullName evidence="1">Ribosomal RNA small subunit methyltransferase G</fullName>
        <ecNumber evidence="1">2.1.1.170</ecNumber>
    </recommendedName>
    <alternativeName>
        <fullName evidence="1">16S rRNA 7-methylguanosine methyltransferase</fullName>
        <shortName evidence="1">16S rRNA m7G methyltransferase</shortName>
    </alternativeName>
</protein>